<evidence type="ECO:0000255" key="1">
    <source>
        <dbReference type="HAMAP-Rule" id="MF_00291"/>
    </source>
</evidence>
<evidence type="ECO:0000305" key="2"/>
<organism>
    <name type="scientific">Photorhabdus laumondii subsp. laumondii (strain DSM 15139 / CIP 105565 / TT01)</name>
    <name type="common">Photorhabdus luminescens subsp. laumondii</name>
    <dbReference type="NCBI Taxonomy" id="243265"/>
    <lineage>
        <taxon>Bacteria</taxon>
        <taxon>Pseudomonadati</taxon>
        <taxon>Pseudomonadota</taxon>
        <taxon>Gammaproteobacteria</taxon>
        <taxon>Enterobacterales</taxon>
        <taxon>Morganellaceae</taxon>
        <taxon>Photorhabdus</taxon>
    </lineage>
</organism>
<keyword id="KW-1185">Reference proteome</keyword>
<keyword id="KW-0687">Ribonucleoprotein</keyword>
<keyword id="KW-0689">Ribosomal protein</keyword>
<feature type="chain" id="PRO_0000134213" description="Small ribosomal subunit protein uS2">
    <location>
        <begin position="1"/>
        <end position="241"/>
    </location>
</feature>
<reference key="1">
    <citation type="journal article" date="2003" name="Nat. Biotechnol.">
        <title>The genome sequence of the entomopathogenic bacterium Photorhabdus luminescens.</title>
        <authorList>
            <person name="Duchaud E."/>
            <person name="Rusniok C."/>
            <person name="Frangeul L."/>
            <person name="Buchrieser C."/>
            <person name="Givaudan A."/>
            <person name="Taourit S."/>
            <person name="Bocs S."/>
            <person name="Boursaux-Eude C."/>
            <person name="Chandler M."/>
            <person name="Charles J.-F."/>
            <person name="Dassa E."/>
            <person name="Derose R."/>
            <person name="Derzelle S."/>
            <person name="Freyssinet G."/>
            <person name="Gaudriault S."/>
            <person name="Medigue C."/>
            <person name="Lanois A."/>
            <person name="Powell K."/>
            <person name="Siguier P."/>
            <person name="Vincent R."/>
            <person name="Wingate V."/>
            <person name="Zouine M."/>
            <person name="Glaser P."/>
            <person name="Boemare N."/>
            <person name="Danchin A."/>
            <person name="Kunst F."/>
        </authorList>
    </citation>
    <scope>NUCLEOTIDE SEQUENCE [LARGE SCALE GENOMIC DNA]</scope>
    <source>
        <strain>DSM 15139 / CIP 105565 / TT01</strain>
    </source>
</reference>
<accession>Q7N8P7</accession>
<dbReference type="EMBL" id="BX571861">
    <property type="protein sequence ID" value="CAE12967.1"/>
    <property type="molecule type" value="Genomic_DNA"/>
</dbReference>
<dbReference type="RefSeq" id="WP_011145048.1">
    <property type="nucleotide sequence ID" value="NC_005126.1"/>
</dbReference>
<dbReference type="SMR" id="Q7N8P7"/>
<dbReference type="STRING" id="243265.plu0672"/>
<dbReference type="GeneID" id="48846961"/>
<dbReference type="KEGG" id="plu:plu0672"/>
<dbReference type="eggNOG" id="COG0052">
    <property type="taxonomic scope" value="Bacteria"/>
</dbReference>
<dbReference type="HOGENOM" id="CLU_040318_1_2_6"/>
<dbReference type="OrthoDB" id="9808036at2"/>
<dbReference type="Proteomes" id="UP000002514">
    <property type="component" value="Chromosome"/>
</dbReference>
<dbReference type="GO" id="GO:0022627">
    <property type="term" value="C:cytosolic small ribosomal subunit"/>
    <property type="evidence" value="ECO:0007669"/>
    <property type="project" value="TreeGrafter"/>
</dbReference>
<dbReference type="GO" id="GO:0003735">
    <property type="term" value="F:structural constituent of ribosome"/>
    <property type="evidence" value="ECO:0007669"/>
    <property type="project" value="InterPro"/>
</dbReference>
<dbReference type="GO" id="GO:0006412">
    <property type="term" value="P:translation"/>
    <property type="evidence" value="ECO:0007669"/>
    <property type="project" value="UniProtKB-UniRule"/>
</dbReference>
<dbReference type="CDD" id="cd01425">
    <property type="entry name" value="RPS2"/>
    <property type="match status" value="1"/>
</dbReference>
<dbReference type="FunFam" id="1.10.287.610:FF:000001">
    <property type="entry name" value="30S ribosomal protein S2"/>
    <property type="match status" value="1"/>
</dbReference>
<dbReference type="Gene3D" id="3.40.50.10490">
    <property type="entry name" value="Glucose-6-phosphate isomerase like protein, domain 1"/>
    <property type="match status" value="1"/>
</dbReference>
<dbReference type="Gene3D" id="1.10.287.610">
    <property type="entry name" value="Helix hairpin bin"/>
    <property type="match status" value="1"/>
</dbReference>
<dbReference type="HAMAP" id="MF_00291_B">
    <property type="entry name" value="Ribosomal_uS2_B"/>
    <property type="match status" value="1"/>
</dbReference>
<dbReference type="InterPro" id="IPR001865">
    <property type="entry name" value="Ribosomal_uS2"/>
</dbReference>
<dbReference type="InterPro" id="IPR005706">
    <property type="entry name" value="Ribosomal_uS2_bac/mit/plastid"/>
</dbReference>
<dbReference type="InterPro" id="IPR018130">
    <property type="entry name" value="Ribosomal_uS2_CS"/>
</dbReference>
<dbReference type="InterPro" id="IPR023591">
    <property type="entry name" value="Ribosomal_uS2_flav_dom_sf"/>
</dbReference>
<dbReference type="NCBIfam" id="TIGR01011">
    <property type="entry name" value="rpsB_bact"/>
    <property type="match status" value="1"/>
</dbReference>
<dbReference type="PANTHER" id="PTHR12534">
    <property type="entry name" value="30S RIBOSOMAL PROTEIN S2 PROKARYOTIC AND ORGANELLAR"/>
    <property type="match status" value="1"/>
</dbReference>
<dbReference type="PANTHER" id="PTHR12534:SF0">
    <property type="entry name" value="SMALL RIBOSOMAL SUBUNIT PROTEIN US2M"/>
    <property type="match status" value="1"/>
</dbReference>
<dbReference type="Pfam" id="PF00318">
    <property type="entry name" value="Ribosomal_S2"/>
    <property type="match status" value="1"/>
</dbReference>
<dbReference type="PRINTS" id="PR00395">
    <property type="entry name" value="RIBOSOMALS2"/>
</dbReference>
<dbReference type="SUPFAM" id="SSF52313">
    <property type="entry name" value="Ribosomal protein S2"/>
    <property type="match status" value="1"/>
</dbReference>
<dbReference type="PROSITE" id="PS00962">
    <property type="entry name" value="RIBOSOMAL_S2_1"/>
    <property type="match status" value="1"/>
</dbReference>
<dbReference type="PROSITE" id="PS00963">
    <property type="entry name" value="RIBOSOMAL_S2_2"/>
    <property type="match status" value="1"/>
</dbReference>
<comment type="similarity">
    <text evidence="1">Belongs to the universal ribosomal protein uS2 family.</text>
</comment>
<proteinExistence type="inferred from homology"/>
<name>RS2_PHOLL</name>
<gene>
    <name evidence="1" type="primary">rpsB</name>
    <name type="ordered locus">plu0672</name>
</gene>
<protein>
    <recommendedName>
        <fullName evidence="1">Small ribosomal subunit protein uS2</fullName>
    </recommendedName>
    <alternativeName>
        <fullName evidence="2">30S ribosomal protein S2</fullName>
    </alternativeName>
</protein>
<sequence>MATVSMRDMLQAGVHFGHQTRYWNPKMKPFIFGARNKVHIINLEKTVPMFNDALAELNKIASRKGKILFVGTKRAASEAVKEAAQNCDQFFVNHRWLGGMLTNWKTVRQSIKRLKDLEAQSQDGTFDKLTKKEALIRSRELGKLENSLGGIKDMGGLPDALFVIDAEHEHIAIKEANNLGIPVFAVVDTNSDPDGVDFIIPGNDDAIRAVKLYLGAVATAVREGRSQDLAVQAEESFVEAE</sequence>